<protein>
    <recommendedName>
        <fullName>Probable histidine--tRNA ligase</fullName>
        <ecNumber>6.1.1.21</ecNumber>
    </recommendedName>
    <alternativeName>
        <fullName>Histidyl-tRNA synthetase</fullName>
        <shortName>HisRS</shortName>
    </alternativeName>
</protein>
<gene>
    <name type="primary">hisS</name>
    <name type="ordered locus">TW794</name>
</gene>
<name>SYH_TROW8</name>
<proteinExistence type="inferred from homology"/>
<keyword id="KW-0030">Aminoacyl-tRNA synthetase</keyword>
<keyword id="KW-0067">ATP-binding</keyword>
<keyword id="KW-0963">Cytoplasm</keyword>
<keyword id="KW-0436">Ligase</keyword>
<keyword id="KW-0547">Nucleotide-binding</keyword>
<keyword id="KW-0648">Protein biosynthesis</keyword>
<evidence type="ECO:0000250" key="1"/>
<evidence type="ECO:0000305" key="2"/>
<sequence length="426" mass="48039">MKIVPPRGMQDFLPHEKEHRDRITEVIYKSYISHGFNPIETPSLENIERLACGVGQENEKLTYKIIRRGLTGAQTVQHPDELIDLGLRFDLTIPLVRFWNTNRARLPKIFRSLQIGHVWRAEKPQKGRRRQFIQCDIDIIGQPEILAEIELLVATLSTLEQLGIRTPKLHINDRRILFSMLNNLGVPHSCHVYVSIVLDKLRKIGLDLVKQELCEFPALVAYLASSVNSNTGSTDLCFDVSSTKDITHIRRTIQSALPHGCKFDCEDLCRIIASVNEFTQTGVFFDPLLVRGMGYYTGPIFEILHDDYSIAGGGRYDGLVERLGGLPTPACGFSIGFERVLGLIKESVSLDPKKMILLYDPKVDPNLVVSVKLEFISKGFIVRPELASRSRRNQIELAKREGFGAFLYLDPLSPPDGLLAKVKPIL</sequence>
<organism>
    <name type="scientific">Tropheryma whipplei (strain TW08/27)</name>
    <name type="common">Whipple's bacillus</name>
    <dbReference type="NCBI Taxonomy" id="218496"/>
    <lineage>
        <taxon>Bacteria</taxon>
        <taxon>Bacillati</taxon>
        <taxon>Actinomycetota</taxon>
        <taxon>Actinomycetes</taxon>
        <taxon>Micrococcales</taxon>
        <taxon>Tropherymataceae</taxon>
        <taxon>Tropheryma</taxon>
    </lineage>
</organism>
<reference key="1">
    <citation type="journal article" date="2003" name="Lancet">
        <title>Sequencing and analysis of the genome of the Whipple's disease bacterium Tropheryma whipplei.</title>
        <authorList>
            <person name="Bentley S.D."/>
            <person name="Maiwald M."/>
            <person name="Murphy L.D."/>
            <person name="Pallen M.J."/>
            <person name="Yeats C.A."/>
            <person name="Dover L.G."/>
            <person name="Norbertczak H.T."/>
            <person name="Besra G.S."/>
            <person name="Quail M.A."/>
            <person name="Harris D.E."/>
            <person name="von Herbay A."/>
            <person name="Goble A."/>
            <person name="Rutter S."/>
            <person name="Squares R."/>
            <person name="Squares S."/>
            <person name="Barrell B.G."/>
            <person name="Parkhill J."/>
            <person name="Relman D.A."/>
        </authorList>
    </citation>
    <scope>NUCLEOTIDE SEQUENCE [LARGE SCALE GENOMIC DNA]</scope>
    <source>
        <strain>TW08/27</strain>
    </source>
</reference>
<dbReference type="EC" id="6.1.1.21"/>
<dbReference type="EMBL" id="BX251412">
    <property type="protein sequence ID" value="CAD67453.1"/>
    <property type="molecule type" value="Genomic_DNA"/>
</dbReference>
<dbReference type="RefSeq" id="WP_011096731.1">
    <property type="nucleotide sequence ID" value="NC_004551.1"/>
</dbReference>
<dbReference type="SMR" id="Q83H72"/>
<dbReference type="GeneID" id="67388575"/>
<dbReference type="KEGG" id="tws:TW794"/>
<dbReference type="HOGENOM" id="CLU_025113_3_0_11"/>
<dbReference type="GO" id="GO:0005737">
    <property type="term" value="C:cytoplasm"/>
    <property type="evidence" value="ECO:0007669"/>
    <property type="project" value="UniProtKB-SubCell"/>
</dbReference>
<dbReference type="GO" id="GO:0005524">
    <property type="term" value="F:ATP binding"/>
    <property type="evidence" value="ECO:0007669"/>
    <property type="project" value="UniProtKB-KW"/>
</dbReference>
<dbReference type="GO" id="GO:0004821">
    <property type="term" value="F:histidine-tRNA ligase activity"/>
    <property type="evidence" value="ECO:0007669"/>
    <property type="project" value="UniProtKB-EC"/>
</dbReference>
<dbReference type="GO" id="GO:0006427">
    <property type="term" value="P:histidyl-tRNA aminoacylation"/>
    <property type="evidence" value="ECO:0007669"/>
    <property type="project" value="InterPro"/>
</dbReference>
<dbReference type="CDD" id="cd00773">
    <property type="entry name" value="HisRS-like_core"/>
    <property type="match status" value="1"/>
</dbReference>
<dbReference type="Gene3D" id="3.30.930.10">
    <property type="entry name" value="Bira Bifunctional Protein, Domain 2"/>
    <property type="match status" value="1"/>
</dbReference>
<dbReference type="InterPro" id="IPR006195">
    <property type="entry name" value="aa-tRNA-synth_II"/>
</dbReference>
<dbReference type="InterPro" id="IPR045864">
    <property type="entry name" value="aa-tRNA-synth_II/BPL/LPL"/>
</dbReference>
<dbReference type="InterPro" id="IPR015807">
    <property type="entry name" value="His-tRNA-ligase"/>
</dbReference>
<dbReference type="InterPro" id="IPR041715">
    <property type="entry name" value="HisRS-like_core"/>
</dbReference>
<dbReference type="InterPro" id="IPR004516">
    <property type="entry name" value="HisRS/HisZ"/>
</dbReference>
<dbReference type="NCBIfam" id="TIGR00442">
    <property type="entry name" value="hisS"/>
    <property type="match status" value="1"/>
</dbReference>
<dbReference type="PANTHER" id="PTHR11476:SF7">
    <property type="entry name" value="HISTIDINE--TRNA LIGASE"/>
    <property type="match status" value="1"/>
</dbReference>
<dbReference type="PANTHER" id="PTHR11476">
    <property type="entry name" value="HISTIDYL-TRNA SYNTHETASE"/>
    <property type="match status" value="1"/>
</dbReference>
<dbReference type="Pfam" id="PF13393">
    <property type="entry name" value="tRNA-synt_His"/>
    <property type="match status" value="1"/>
</dbReference>
<dbReference type="PIRSF" id="PIRSF001549">
    <property type="entry name" value="His-tRNA_synth"/>
    <property type="match status" value="1"/>
</dbReference>
<dbReference type="SUPFAM" id="SSF55681">
    <property type="entry name" value="Class II aaRS and biotin synthetases"/>
    <property type="match status" value="1"/>
</dbReference>
<dbReference type="PROSITE" id="PS50862">
    <property type="entry name" value="AA_TRNA_LIGASE_II"/>
    <property type="match status" value="1"/>
</dbReference>
<feature type="chain" id="PRO_0000136287" description="Probable histidine--tRNA ligase">
    <location>
        <begin position="1"/>
        <end position="426"/>
    </location>
</feature>
<comment type="catalytic activity">
    <reaction>
        <text>tRNA(His) + L-histidine + ATP = L-histidyl-tRNA(His) + AMP + diphosphate + H(+)</text>
        <dbReference type="Rhea" id="RHEA:17313"/>
        <dbReference type="Rhea" id="RHEA-COMP:9665"/>
        <dbReference type="Rhea" id="RHEA-COMP:9689"/>
        <dbReference type="ChEBI" id="CHEBI:15378"/>
        <dbReference type="ChEBI" id="CHEBI:30616"/>
        <dbReference type="ChEBI" id="CHEBI:33019"/>
        <dbReference type="ChEBI" id="CHEBI:57595"/>
        <dbReference type="ChEBI" id="CHEBI:78442"/>
        <dbReference type="ChEBI" id="CHEBI:78527"/>
        <dbReference type="ChEBI" id="CHEBI:456215"/>
        <dbReference type="EC" id="6.1.1.21"/>
    </reaction>
</comment>
<comment type="subunit">
    <text evidence="1">Homodimer.</text>
</comment>
<comment type="subcellular location">
    <subcellularLocation>
        <location evidence="1">Cytoplasm</location>
    </subcellularLocation>
</comment>
<comment type="similarity">
    <text evidence="2">Belongs to the class-II aminoacyl-tRNA synthetase family.</text>
</comment>
<accession>Q83H72</accession>